<feature type="chain" id="PRO_0000171226" description="Serine/threonine-protein kinase PknL">
    <location>
        <begin position="1"/>
        <end position="399"/>
    </location>
</feature>
<feature type="topological domain" description="Cytoplasmic" evidence="1">
    <location>
        <begin position="1"/>
        <end position="368"/>
    </location>
</feature>
<feature type="transmembrane region" description="Helical" evidence="1">
    <location>
        <begin position="369"/>
        <end position="389"/>
    </location>
</feature>
<feature type="topological domain" description="Extracellular" evidence="1">
    <location>
        <begin position="390"/>
        <end position="399"/>
    </location>
</feature>
<feature type="domain" description="Protein kinase" evidence="2">
    <location>
        <begin position="19"/>
        <end position="278"/>
    </location>
</feature>
<feature type="region of interest" description="Disordered" evidence="4">
    <location>
        <begin position="312"/>
        <end position="346"/>
    </location>
</feature>
<feature type="active site" description="Proton acceptor" evidence="2 3">
    <location>
        <position position="142"/>
    </location>
</feature>
<feature type="binding site" evidence="2">
    <location>
        <begin position="25"/>
        <end position="33"/>
    </location>
    <ligand>
        <name>ATP</name>
        <dbReference type="ChEBI" id="CHEBI:30616"/>
    </ligand>
</feature>
<feature type="binding site" evidence="2">
    <location>
        <position position="48"/>
    </location>
    <ligand>
        <name>ATP</name>
        <dbReference type="ChEBI" id="CHEBI:30616"/>
    </ligand>
</feature>
<feature type="modified residue" description="Phosphothreonine; by autocatalysis" evidence="5">
    <location>
        <position position="32"/>
    </location>
</feature>
<feature type="modified residue" description="Phosphothreonine; by autocatalysis" evidence="5">
    <location>
        <position position="62"/>
    </location>
</feature>
<feature type="modified residue" description="Phosphothreonine; by autocatalysis" evidence="5">
    <location>
        <position position="173"/>
    </location>
</feature>
<feature type="modified residue" description="Phosphothreonine; by autocatalysis" evidence="5">
    <location>
        <position position="175"/>
    </location>
</feature>
<feature type="modified residue" description="Phosphothreonine; by autocatalysis" evidence="5">
    <location>
        <position position="323"/>
    </location>
</feature>
<feature type="mutagenesis site" description="Lack of kinase activity." evidence="5 6">
    <original>K</original>
    <variation>M</variation>
    <location>
        <position position="48"/>
    </location>
</feature>
<feature type="mutagenesis site" description="Does not affect autophosphorylation and transphosphorylation activities." evidence="5">
    <original>S</original>
    <variation>A</variation>
    <location>
        <position position="171"/>
    </location>
</feature>
<feature type="mutagenesis site" description="Strong decrease in autophosphorylation activity. Lack of transphosphorylation activity." evidence="5">
    <original>T</original>
    <variation>A</variation>
    <location>
        <position position="173"/>
    </location>
</feature>
<feature type="mutagenesis site" description="Does not affect autophosphorylation and transphosphorylation activities." evidence="5">
    <original>S</original>
    <variation>A</variation>
    <location>
        <position position="174"/>
    </location>
</feature>
<feature type="mutagenesis site" description="Decrease in autophosphorylation activity. Does not affect transphosphorylation activity." evidence="5">
    <original>T</original>
    <variation>A</variation>
    <location>
        <position position="175"/>
    </location>
</feature>
<accession>P9WI63</accession>
<accession>L0TAE8</accession>
<accession>O53510</accession>
<dbReference type="EC" id="2.7.11.1"/>
<dbReference type="EMBL" id="AL123456">
    <property type="protein sequence ID" value="CCP44953.1"/>
    <property type="molecule type" value="Genomic_DNA"/>
</dbReference>
<dbReference type="PIR" id="B70936">
    <property type="entry name" value="B70936"/>
</dbReference>
<dbReference type="RefSeq" id="NP_216692.1">
    <property type="nucleotide sequence ID" value="NC_000962.3"/>
</dbReference>
<dbReference type="RefSeq" id="WP_003899202.1">
    <property type="nucleotide sequence ID" value="NZ_NVQJ01000083.1"/>
</dbReference>
<dbReference type="SMR" id="P9WI63"/>
<dbReference type="FunCoup" id="P9WI63">
    <property type="interactions" value="35"/>
</dbReference>
<dbReference type="STRING" id="83332.Rv2176"/>
<dbReference type="iPTMnet" id="P9WI63"/>
<dbReference type="PaxDb" id="83332-Rv2176"/>
<dbReference type="DNASU" id="888340"/>
<dbReference type="GeneID" id="888340"/>
<dbReference type="KEGG" id="mtu:Rv2176"/>
<dbReference type="KEGG" id="mtv:RVBD_2176"/>
<dbReference type="PATRIC" id="fig|83332.111.peg.2422"/>
<dbReference type="TubercuList" id="Rv2176"/>
<dbReference type="eggNOG" id="COG0515">
    <property type="taxonomic scope" value="Bacteria"/>
</dbReference>
<dbReference type="InParanoid" id="P9WI63"/>
<dbReference type="OrthoDB" id="9762169at2"/>
<dbReference type="PhylomeDB" id="P9WI63"/>
<dbReference type="BRENDA" id="2.7.11.1">
    <property type="organism ID" value="3445"/>
</dbReference>
<dbReference type="Proteomes" id="UP000001584">
    <property type="component" value="Chromosome"/>
</dbReference>
<dbReference type="GO" id="GO:0005886">
    <property type="term" value="C:plasma membrane"/>
    <property type="evidence" value="ECO:0007005"/>
    <property type="project" value="MTBBASE"/>
</dbReference>
<dbReference type="GO" id="GO:0005524">
    <property type="term" value="F:ATP binding"/>
    <property type="evidence" value="ECO:0007669"/>
    <property type="project" value="UniProtKB-KW"/>
</dbReference>
<dbReference type="GO" id="GO:0004672">
    <property type="term" value="F:protein kinase activity"/>
    <property type="evidence" value="ECO:0000314"/>
    <property type="project" value="MTBBASE"/>
</dbReference>
<dbReference type="GO" id="GO:0106310">
    <property type="term" value="F:protein serine kinase activity"/>
    <property type="evidence" value="ECO:0007669"/>
    <property type="project" value="RHEA"/>
</dbReference>
<dbReference type="GO" id="GO:0004674">
    <property type="term" value="F:protein serine/threonine kinase activity"/>
    <property type="evidence" value="ECO:0000314"/>
    <property type="project" value="UniProtKB"/>
</dbReference>
<dbReference type="GO" id="GO:0045717">
    <property type="term" value="P:negative regulation of fatty acid biosynthetic process"/>
    <property type="evidence" value="ECO:0000314"/>
    <property type="project" value="MTBBASE"/>
</dbReference>
<dbReference type="CDD" id="cd14014">
    <property type="entry name" value="STKc_PknB_like"/>
    <property type="match status" value="1"/>
</dbReference>
<dbReference type="FunFam" id="1.10.510.10:FF:000021">
    <property type="entry name" value="Serine/threonine protein kinase"/>
    <property type="match status" value="1"/>
</dbReference>
<dbReference type="FunFam" id="3.30.200.20:FF:000035">
    <property type="entry name" value="Serine/threonine protein kinase Stk1"/>
    <property type="match status" value="1"/>
</dbReference>
<dbReference type="Gene3D" id="3.30.200.20">
    <property type="entry name" value="Phosphorylase Kinase, domain 1"/>
    <property type="match status" value="1"/>
</dbReference>
<dbReference type="Gene3D" id="1.10.510.10">
    <property type="entry name" value="Transferase(Phosphotransferase) domain 1"/>
    <property type="match status" value="1"/>
</dbReference>
<dbReference type="InterPro" id="IPR011009">
    <property type="entry name" value="Kinase-like_dom_sf"/>
</dbReference>
<dbReference type="InterPro" id="IPR000719">
    <property type="entry name" value="Prot_kinase_dom"/>
</dbReference>
<dbReference type="InterPro" id="IPR008271">
    <property type="entry name" value="Ser/Thr_kinase_AS"/>
</dbReference>
<dbReference type="PANTHER" id="PTHR43289">
    <property type="entry name" value="MITOGEN-ACTIVATED PROTEIN KINASE KINASE KINASE 20-RELATED"/>
    <property type="match status" value="1"/>
</dbReference>
<dbReference type="PANTHER" id="PTHR43289:SF34">
    <property type="entry name" value="SERINE_THREONINE-PROTEIN KINASE YBDM-RELATED"/>
    <property type="match status" value="1"/>
</dbReference>
<dbReference type="Pfam" id="PF00069">
    <property type="entry name" value="Pkinase"/>
    <property type="match status" value="1"/>
</dbReference>
<dbReference type="SMART" id="SM00220">
    <property type="entry name" value="S_TKc"/>
    <property type="match status" value="1"/>
</dbReference>
<dbReference type="SUPFAM" id="SSF56112">
    <property type="entry name" value="Protein kinase-like (PK-like)"/>
    <property type="match status" value="1"/>
</dbReference>
<dbReference type="PROSITE" id="PS50011">
    <property type="entry name" value="PROTEIN_KINASE_DOM"/>
    <property type="match status" value="1"/>
</dbReference>
<dbReference type="PROSITE" id="PS00108">
    <property type="entry name" value="PROTEIN_KINASE_ST"/>
    <property type="match status" value="1"/>
</dbReference>
<name>PKNL_MYCTU</name>
<reference key="1">
    <citation type="journal article" date="1998" name="Nature">
        <title>Deciphering the biology of Mycobacterium tuberculosis from the complete genome sequence.</title>
        <authorList>
            <person name="Cole S.T."/>
            <person name="Brosch R."/>
            <person name="Parkhill J."/>
            <person name="Garnier T."/>
            <person name="Churcher C.M."/>
            <person name="Harris D.E."/>
            <person name="Gordon S.V."/>
            <person name="Eiglmeier K."/>
            <person name="Gas S."/>
            <person name="Barry C.E. III"/>
            <person name="Tekaia F."/>
            <person name="Badcock K."/>
            <person name="Basham D."/>
            <person name="Brown D."/>
            <person name="Chillingworth T."/>
            <person name="Connor R."/>
            <person name="Davies R.M."/>
            <person name="Devlin K."/>
            <person name="Feltwell T."/>
            <person name="Gentles S."/>
            <person name="Hamlin N."/>
            <person name="Holroyd S."/>
            <person name="Hornsby T."/>
            <person name="Jagels K."/>
            <person name="Krogh A."/>
            <person name="McLean J."/>
            <person name="Moule S."/>
            <person name="Murphy L.D."/>
            <person name="Oliver S."/>
            <person name="Osborne J."/>
            <person name="Quail M.A."/>
            <person name="Rajandream M.A."/>
            <person name="Rogers J."/>
            <person name="Rutter S."/>
            <person name="Seeger K."/>
            <person name="Skelton S."/>
            <person name="Squares S."/>
            <person name="Squares R."/>
            <person name="Sulston J.E."/>
            <person name="Taylor K."/>
            <person name="Whitehead S."/>
            <person name="Barrell B.G."/>
        </authorList>
    </citation>
    <scope>NUCLEOTIDE SEQUENCE [LARGE SCALE GENOMIC DNA]</scope>
    <source>
        <strain>ATCC 25618 / H37Rv</strain>
    </source>
</reference>
<reference key="2">
    <citation type="journal article" date="2008" name="Protein Expr. Purif.">
        <title>Molecular cloning and biochemical characterization of a serine threonine protein kinase, PknL, from Mycobacterium tuberculosis.</title>
        <authorList>
            <person name="Lakshminarayan H."/>
            <person name="Narayanan S."/>
            <person name="Bach H."/>
            <person name="Sundaram K.G."/>
            <person name="Av-Gay Y."/>
        </authorList>
    </citation>
    <scope>IDENTIFICATION BY MASS SPECTROMETRY</scope>
    <scope>CATALYTIC ACTIVITY</scope>
    <scope>AUTOPHOSPHORYLATION</scope>
    <scope>MUTAGENESIS OF LYS-48</scope>
    <source>
        <strain>ATCC 25618 / H37Rv</strain>
    </source>
</reference>
<reference key="3">
    <citation type="journal article" date="2008" name="Proteomics">
        <title>The Mycobacterium tuberculosis serine/threonine kinase PknL phosphorylates Rv2175c: mass spectrometric profiling of the activation loop phosphorylation sites and their role in the recruitment of Rv2175c.</title>
        <authorList>
            <person name="Canova M.J."/>
            <person name="Veyron-Churlet R."/>
            <person name="Zanella-Cleon I."/>
            <person name="Cohen-Gonsaud M."/>
            <person name="Cozzone A.J."/>
            <person name="Becchi M."/>
            <person name="Kremer L."/>
            <person name="Molle V."/>
        </authorList>
    </citation>
    <scope>FUNCTION</scope>
    <scope>CATALYTIC ACTIVITY</scope>
    <scope>SUBCELLULAR LOCATION</scope>
    <scope>TOPOLOGY</scope>
    <scope>PHOSPHORYLATION AT THR-32; THR-62; THR-173; THR-175 AND THR-323</scope>
    <scope>MUTAGENESIS OF LYS-48; SER-171; THR-173; SER-174 AND THR-175</scope>
    <source>
        <strain>ATCC 25618 / H37Rv</strain>
    </source>
</reference>
<reference key="4">
    <citation type="journal article" date="2009" name="J. Biol. Chem.">
        <title>The Mycobacterium tuberculosis Ser/Thr kinase substrate Rv2175c is a DNA-binding protein regulated by phosphorylation.</title>
        <authorList>
            <person name="Cohen-Gonsaud M."/>
            <person name="Barthe P."/>
            <person name="Canova M.J."/>
            <person name="Stagier-Simon C."/>
            <person name="Kremer L."/>
            <person name="Roumestand C."/>
            <person name="Molle V."/>
        </authorList>
    </citation>
    <scope>FUNCTION</scope>
    <scope>CATALYTIC ACTIVITY</scope>
    <source>
        <strain>ATCC 25618 / H37Rv</strain>
    </source>
</reference>
<organism>
    <name type="scientific">Mycobacterium tuberculosis (strain ATCC 25618 / H37Rv)</name>
    <dbReference type="NCBI Taxonomy" id="83332"/>
    <lineage>
        <taxon>Bacteria</taxon>
        <taxon>Bacillati</taxon>
        <taxon>Actinomycetota</taxon>
        <taxon>Actinomycetes</taxon>
        <taxon>Mycobacteriales</taxon>
        <taxon>Mycobacteriaceae</taxon>
        <taxon>Mycobacterium</taxon>
        <taxon>Mycobacterium tuberculosis complex</taxon>
    </lineage>
</organism>
<comment type="function">
    <text evidence="5 7">Phosphorylates the DNA-binding protein Rv2175c. May be involved in the regulation of cell division and cell envelope biosynthesis.</text>
</comment>
<comment type="catalytic activity">
    <reaction evidence="5 6 7">
        <text>L-seryl-[protein] + ATP = O-phospho-L-seryl-[protein] + ADP + H(+)</text>
        <dbReference type="Rhea" id="RHEA:17989"/>
        <dbReference type="Rhea" id="RHEA-COMP:9863"/>
        <dbReference type="Rhea" id="RHEA-COMP:11604"/>
        <dbReference type="ChEBI" id="CHEBI:15378"/>
        <dbReference type="ChEBI" id="CHEBI:29999"/>
        <dbReference type="ChEBI" id="CHEBI:30616"/>
        <dbReference type="ChEBI" id="CHEBI:83421"/>
        <dbReference type="ChEBI" id="CHEBI:456216"/>
        <dbReference type="EC" id="2.7.11.1"/>
    </reaction>
</comment>
<comment type="catalytic activity">
    <reaction evidence="5 6 7">
        <text>L-threonyl-[protein] + ATP = O-phospho-L-threonyl-[protein] + ADP + H(+)</text>
        <dbReference type="Rhea" id="RHEA:46608"/>
        <dbReference type="Rhea" id="RHEA-COMP:11060"/>
        <dbReference type="Rhea" id="RHEA-COMP:11605"/>
        <dbReference type="ChEBI" id="CHEBI:15378"/>
        <dbReference type="ChEBI" id="CHEBI:30013"/>
        <dbReference type="ChEBI" id="CHEBI:30616"/>
        <dbReference type="ChEBI" id="CHEBI:61977"/>
        <dbReference type="ChEBI" id="CHEBI:456216"/>
        <dbReference type="EC" id="2.7.11.1"/>
    </reaction>
</comment>
<comment type="subcellular location">
    <subcellularLocation>
        <location evidence="8">Cell membrane</location>
        <topology evidence="8">Single-pass membrane protein</topology>
    </subcellularLocation>
</comment>
<comment type="PTM">
    <text evidence="5">Autophosphorylated. Thr-173 is required for autophosphorylation and transphosphorylation activities. Thr-175 is not necessary for autophosphorylation activity, but is required for full kinase activity.</text>
</comment>
<comment type="similarity">
    <text evidence="2">Belongs to the protein kinase superfamily. Ser/Thr protein kinase family.</text>
</comment>
<evidence type="ECO:0000255" key="1"/>
<evidence type="ECO:0000255" key="2">
    <source>
        <dbReference type="PROSITE-ProRule" id="PRU00159"/>
    </source>
</evidence>
<evidence type="ECO:0000255" key="3">
    <source>
        <dbReference type="PROSITE-ProRule" id="PRU10027"/>
    </source>
</evidence>
<evidence type="ECO:0000256" key="4">
    <source>
        <dbReference type="SAM" id="MobiDB-lite"/>
    </source>
</evidence>
<evidence type="ECO:0000269" key="5">
    <source>
    </source>
</evidence>
<evidence type="ECO:0000269" key="6">
    <source>
    </source>
</evidence>
<evidence type="ECO:0000269" key="7">
    <source>
    </source>
</evidence>
<evidence type="ECO:0000305" key="8">
    <source>
    </source>
</evidence>
<gene>
    <name type="primary">pknL</name>
    <name type="ordered locus">Rv2176</name>
    <name type="ORF">MTV021.09</name>
</gene>
<protein>
    <recommendedName>
        <fullName>Serine/threonine-protein kinase PknL</fullName>
        <ecNumber>2.7.11.1</ecNumber>
    </recommendedName>
</protein>
<sequence>MVEAGTRDPLESALLDSRYLVQAKIASGGTSTVYRGLDVRLDRPVALKVMDSRYAGDEQFLTRFRLEARAVARLNNRALVAVYDQGKDGRHPFLVMELIEGGTLRELLIERGPMPPHAVVAVLRPVLGGLAAAHRAGLVHRDVKPENILISDDGDVKLADFGLVRAVAAASITSTGVILGTAAYLSPEQVRDGNADPRSDVYSVGVLVYELLTGHTPFTGDSALSIAYQRLDADVPRASAVIDGVPPQFDELVACATARNPADRYADAIAMGADLEAIAEELALPEFRVPAPRNSAQHRSAALYRSRITQQGQLGAKPVHHPTRQLTRQPGDCSEPASGSEPEHEPITGQFAGIAIEEFIWARQHARRMVLVWVSVVLAITGLVASAAWTIGSNLSGLL</sequence>
<proteinExistence type="evidence at protein level"/>
<keyword id="KW-0067">ATP-binding</keyword>
<keyword id="KW-1003">Cell membrane</keyword>
<keyword id="KW-0418">Kinase</keyword>
<keyword id="KW-0472">Membrane</keyword>
<keyword id="KW-0547">Nucleotide-binding</keyword>
<keyword id="KW-0597">Phosphoprotein</keyword>
<keyword id="KW-1185">Reference proteome</keyword>
<keyword id="KW-0723">Serine/threonine-protein kinase</keyword>
<keyword id="KW-0808">Transferase</keyword>
<keyword id="KW-0812">Transmembrane</keyword>
<keyword id="KW-1133">Transmembrane helix</keyword>